<evidence type="ECO:0000269" key="1">
    <source>
    </source>
</evidence>
<evidence type="ECO:0000269" key="2">
    <source>
    </source>
</evidence>
<evidence type="ECO:0000269" key="3">
    <source>
    </source>
</evidence>
<evidence type="ECO:0000269" key="4">
    <source>
    </source>
</evidence>
<evidence type="ECO:0000269" key="5">
    <source>
    </source>
</evidence>
<evidence type="ECO:0000269" key="6">
    <source>
    </source>
</evidence>
<evidence type="ECO:0000303" key="7">
    <source>
    </source>
</evidence>
<evidence type="ECO:0000303" key="8">
    <source>
    </source>
</evidence>
<evidence type="ECO:0000305" key="9"/>
<evidence type="ECO:0000305" key="10">
    <source>
    </source>
</evidence>
<evidence type="ECO:0000305" key="11">
    <source>
    </source>
</evidence>
<evidence type="ECO:0007744" key="12">
    <source>
        <dbReference type="PDB" id="2Y7C"/>
    </source>
</evidence>
<evidence type="ECO:0007744" key="13">
    <source>
        <dbReference type="PDB" id="2Y7H"/>
    </source>
</evidence>
<name>T1SK_ECOLI</name>
<protein>
    <recommendedName>
        <fullName evidence="9">Type I restriction enzyme EcoKI specificity subunit</fullName>
        <shortName>S protein</shortName>
    </recommendedName>
    <alternativeName>
        <fullName evidence="7">Type I specificity subunit S.EcoKI</fullName>
        <shortName evidence="7">S.EcoKI</shortName>
    </alternativeName>
    <alternativeName>
        <fullName>Type-1 restriction enzyme EcoKI specificity subunit</fullName>
    </alternativeName>
</protein>
<keyword id="KW-0002">3D-structure</keyword>
<keyword id="KW-0903">Direct protein sequencing</keyword>
<keyword id="KW-0238">DNA-binding</keyword>
<keyword id="KW-1185">Reference proteome</keyword>
<keyword id="KW-0680">Restriction system</keyword>
<organism>
    <name type="scientific">Escherichia coli (strain K12)</name>
    <dbReference type="NCBI Taxonomy" id="83333"/>
    <lineage>
        <taxon>Bacteria</taxon>
        <taxon>Pseudomonadati</taxon>
        <taxon>Pseudomonadota</taxon>
        <taxon>Gammaproteobacteria</taxon>
        <taxon>Enterobacterales</taxon>
        <taxon>Enterobacteriaceae</taxon>
        <taxon>Escherichia</taxon>
    </lineage>
</organism>
<accession>P05719</accession>
<accession>Q2M5W8</accession>
<dbReference type="EMBL" id="V00288">
    <property type="protein sequence ID" value="CAA23554.1"/>
    <property type="molecule type" value="Genomic_DNA"/>
</dbReference>
<dbReference type="EMBL" id="U14003">
    <property type="protein sequence ID" value="AAA97245.1"/>
    <property type="molecule type" value="Genomic_DNA"/>
</dbReference>
<dbReference type="EMBL" id="U00096">
    <property type="protein sequence ID" value="AAC77304.1"/>
    <property type="molecule type" value="Genomic_DNA"/>
</dbReference>
<dbReference type="EMBL" id="AP009048">
    <property type="protein sequence ID" value="BAE78338.1"/>
    <property type="molecule type" value="Genomic_DNA"/>
</dbReference>
<dbReference type="PIR" id="A30369">
    <property type="entry name" value="NDECKS"/>
</dbReference>
<dbReference type="RefSeq" id="NP_418768.1">
    <property type="nucleotide sequence ID" value="NC_000913.3"/>
</dbReference>
<dbReference type="RefSeq" id="WP_001272447.1">
    <property type="nucleotide sequence ID" value="NZ_LN832404.1"/>
</dbReference>
<dbReference type="PDB" id="2Y7C">
    <property type="method" value="EM"/>
    <property type="resolution" value="18.00 A"/>
    <property type="chains" value="A=1-464"/>
</dbReference>
<dbReference type="PDB" id="2Y7H">
    <property type="method" value="EM"/>
    <property type="resolution" value="18.00 A"/>
    <property type="chains" value="A=1-464"/>
</dbReference>
<dbReference type="PDBsum" id="2Y7C"/>
<dbReference type="PDBsum" id="2Y7H"/>
<dbReference type="SMR" id="P05719"/>
<dbReference type="BioGRID" id="4262767">
    <property type="interactions" value="131"/>
</dbReference>
<dbReference type="ComplexPortal" id="CPX-5628">
    <property type="entry name" value="Type I restriction-modification EcoKI complex"/>
</dbReference>
<dbReference type="DIP" id="DIP-9945N"/>
<dbReference type="FunCoup" id="P05719">
    <property type="interactions" value="40"/>
</dbReference>
<dbReference type="IntAct" id="P05719">
    <property type="interactions" value="12"/>
</dbReference>
<dbReference type="STRING" id="511145.b4348"/>
<dbReference type="REBASE" id="13378">
    <property type="entry name" value="S.EcoW3110ORF4339P"/>
</dbReference>
<dbReference type="REBASE" id="3646">
    <property type="entry name" value="S.EcoKI"/>
</dbReference>
<dbReference type="REBASE" id="800571">
    <property type="entry name" value="S.Cdi08ORF3283P"/>
</dbReference>
<dbReference type="jPOST" id="P05719"/>
<dbReference type="PaxDb" id="511145-b4348"/>
<dbReference type="EnsemblBacteria" id="AAC77304">
    <property type="protein sequence ID" value="AAC77304"/>
    <property type="gene ID" value="b4348"/>
</dbReference>
<dbReference type="GeneID" id="948867"/>
<dbReference type="KEGG" id="ecj:JW4311"/>
<dbReference type="KEGG" id="eco:b4348"/>
<dbReference type="KEGG" id="ecoc:C3026_23490"/>
<dbReference type="PATRIC" id="fig|1411691.4.peg.2338"/>
<dbReference type="EchoBASE" id="EB0455"/>
<dbReference type="eggNOG" id="COG0732">
    <property type="taxonomic scope" value="Bacteria"/>
</dbReference>
<dbReference type="HOGENOM" id="CLU_021095_10_2_6"/>
<dbReference type="InParanoid" id="P05719"/>
<dbReference type="OMA" id="LPEGWCW"/>
<dbReference type="OrthoDB" id="9798929at2"/>
<dbReference type="PhylomeDB" id="P05719"/>
<dbReference type="BioCyc" id="EcoCyc:EG10460-MONOMER"/>
<dbReference type="BioCyc" id="MetaCyc:EG10460-MONOMER"/>
<dbReference type="BRENDA" id="3.1.21.3">
    <property type="organism ID" value="2165"/>
</dbReference>
<dbReference type="EvolutionaryTrace" id="P05719"/>
<dbReference type="PRO" id="PR:P05719"/>
<dbReference type="Proteomes" id="UP000000625">
    <property type="component" value="Chromosome"/>
</dbReference>
<dbReference type="GO" id="GO:0019812">
    <property type="term" value="C:type I site-specific deoxyribonuclease complex"/>
    <property type="evidence" value="ECO:0000353"/>
    <property type="project" value="ComplexPortal"/>
</dbReference>
<dbReference type="GO" id="GO:0003677">
    <property type="term" value="F:DNA binding"/>
    <property type="evidence" value="ECO:0007669"/>
    <property type="project" value="UniProtKB-KW"/>
</dbReference>
<dbReference type="GO" id="GO:0009307">
    <property type="term" value="P:DNA restriction-modification system"/>
    <property type="evidence" value="ECO:0000314"/>
    <property type="project" value="ComplexPortal"/>
</dbReference>
<dbReference type="CDD" id="cd17252">
    <property type="entry name" value="RMtype1_S_EcoKI-TRD1-CR1_like"/>
    <property type="match status" value="1"/>
</dbReference>
<dbReference type="CDD" id="cd17261">
    <property type="entry name" value="RMtype1_S_EcoKI-TRD2-CR2_like"/>
    <property type="match status" value="1"/>
</dbReference>
<dbReference type="Gene3D" id="3.90.220.20">
    <property type="entry name" value="DNA methylase specificity domains"/>
    <property type="match status" value="2"/>
</dbReference>
<dbReference type="InterPro" id="IPR000055">
    <property type="entry name" value="Restrct_endonuc_typeI_TRD"/>
</dbReference>
<dbReference type="InterPro" id="IPR044946">
    <property type="entry name" value="Restrct_endonuc_typeI_TRD_sf"/>
</dbReference>
<dbReference type="InterPro" id="IPR051212">
    <property type="entry name" value="Type-I_RE_S_subunit"/>
</dbReference>
<dbReference type="NCBIfam" id="NF007278">
    <property type="entry name" value="PRK09737.1"/>
    <property type="match status" value="1"/>
</dbReference>
<dbReference type="PANTHER" id="PTHR43140:SF1">
    <property type="entry name" value="TYPE I RESTRICTION ENZYME ECOKI SPECIFICITY SUBUNIT"/>
    <property type="match status" value="1"/>
</dbReference>
<dbReference type="PANTHER" id="PTHR43140">
    <property type="entry name" value="TYPE-1 RESTRICTION ENZYME ECOKI SPECIFICITY PROTEIN"/>
    <property type="match status" value="1"/>
</dbReference>
<dbReference type="Pfam" id="PF01420">
    <property type="entry name" value="Methylase_S"/>
    <property type="match status" value="2"/>
</dbReference>
<dbReference type="SUPFAM" id="SSF116734">
    <property type="entry name" value="DNA methylase specificity domain"/>
    <property type="match status" value="2"/>
</dbReference>
<proteinExistence type="evidence at protein level"/>
<comment type="function">
    <text evidence="2 3 5 6">The specificity (S) subunit of a type I restriction enzyme; this subunit dictates DNA sequence specificity. The M and S subunits together form a methyltransferase (MTase) that methylates A-2 on the top and A-3 on the bottom strand of the sequence 5'-AACN(6)GTGC-3'. In the presence of the R subunit the complex can also act as an endonuclease, binding to the same target sequence but cutting the DNA some distance from this site. Whether the DNA is cut or modified depends on the methylation state of the target sequence. When the target site is unmodified, the DNA is cut. When the target site is hemimethylated, the complex acts as a maintenance MTase modifying the DNA so that both strands become methylated. After locating a non-methylated recognition site, the enzyme complex serves as a molecular motor that translocates DNA in an ATP-dependent manner until a collision occurs that triggers cleavage.</text>
</comment>
<comment type="subunit">
    <text evidence="1 3 5 6">The type I restriction/modification system is composed of three polypeptides R, M and S (PubMed:6255295). The restriction enzyme has stoichiometry R(2)M(2)S(1) (PubMed:9033396). The methyltransferase is composed of M(2)S(1) (PubMed:19074193, PubMed:8514761, PubMed:9033396).</text>
</comment>
<comment type="subunit">
    <text evidence="1">(Microbial infection) Interacts with Escherichia phage T7 protein Ocr; this interaction leads to the inhibition of the methyltransferase restriction enzyme M.EcoKI composed of M(2)S(1).</text>
</comment>
<comment type="induction">
    <text evidence="3 10">Encoded in the hsd locus, in the order hsdR-hsdM-hsdS. There is a promoter upstream of hsdR and another between hsdR and hsdM (PubMed:6255295). This probably allows expression of the methylase enzyme before the restriction-specific subunit (Probable).</text>
</comment>
<comment type="domain">
    <text evidence="11">Contains two DNA recognition domains, each specifying recognition of one of the two defined components of the target sequence.</text>
</comment>
<comment type="miscellaneous">
    <text evidence="2 3 5 6">Type I restriction and modification enzymes are complex, multifunctional systems which require ATP, S-adenosyl methionine and Mg(2+) as cofactors and, in addition to their endonucleolytic and methylase activities, are potent DNA-dependent ATPases.</text>
</comment>
<comment type="similarity">
    <text evidence="9">Belongs to the type-I restriction system S methylase family.</text>
</comment>
<reference key="1">
    <citation type="journal article" date="1983" name="J. Mol. Biol.">
        <title>Sequence diversity among related genes for recognition of specific targets in DNA molecules.</title>
        <authorList>
            <person name="Gough J.A."/>
            <person name="Murray N.E."/>
        </authorList>
    </citation>
    <scope>NUCLEOTIDE SEQUENCE [GENOMIC DNA]</scope>
    <scope>DOMAIN</scope>
    <source>
        <strain>K12</strain>
    </source>
</reference>
<reference key="2">
    <citation type="journal article" date="1995" name="Nucleic Acids Res.">
        <title>Analysis of the Escherichia coli genome VI: DNA sequence of the region from 92.8 through 100 minutes.</title>
        <authorList>
            <person name="Burland V.D."/>
            <person name="Plunkett G. III"/>
            <person name="Sofia H.J."/>
            <person name="Daniels D.L."/>
            <person name="Blattner F.R."/>
        </authorList>
    </citation>
    <scope>NUCLEOTIDE SEQUENCE [LARGE SCALE GENOMIC DNA]</scope>
    <source>
        <strain>K12 / MG1655 / ATCC 47076</strain>
    </source>
</reference>
<reference key="3">
    <citation type="journal article" date="1997" name="Science">
        <title>The complete genome sequence of Escherichia coli K-12.</title>
        <authorList>
            <person name="Blattner F.R."/>
            <person name="Plunkett G. III"/>
            <person name="Bloch C.A."/>
            <person name="Perna N.T."/>
            <person name="Burland V."/>
            <person name="Riley M."/>
            <person name="Collado-Vides J."/>
            <person name="Glasner J.D."/>
            <person name="Rode C.K."/>
            <person name="Mayhew G.F."/>
            <person name="Gregor J."/>
            <person name="Davis N.W."/>
            <person name="Kirkpatrick H.A."/>
            <person name="Goeden M.A."/>
            <person name="Rose D.J."/>
            <person name="Mau B."/>
            <person name="Shao Y."/>
        </authorList>
    </citation>
    <scope>NUCLEOTIDE SEQUENCE [LARGE SCALE GENOMIC DNA]</scope>
    <source>
        <strain>K12 / MG1655 / ATCC 47076</strain>
    </source>
</reference>
<reference key="4">
    <citation type="journal article" date="2006" name="Mol. Syst. Biol.">
        <title>Highly accurate genome sequences of Escherichia coli K-12 strains MG1655 and W3110.</title>
        <authorList>
            <person name="Hayashi K."/>
            <person name="Morooka N."/>
            <person name="Yamamoto Y."/>
            <person name="Fujita K."/>
            <person name="Isono K."/>
            <person name="Choi S."/>
            <person name="Ohtsubo E."/>
            <person name="Baba T."/>
            <person name="Wanner B.L."/>
            <person name="Mori H."/>
            <person name="Horiuchi T."/>
        </authorList>
    </citation>
    <scope>NUCLEOTIDE SEQUENCE [LARGE SCALE GENOMIC DNA]</scope>
    <source>
        <strain>K12 / W3110 / ATCC 27325 / DSM 5911</strain>
    </source>
</reference>
<reference key="5">
    <citation type="journal article" date="1993" name="J. Biol. Chem.">
        <title>Purification and characterization of the methyltransferase from the type 1 restriction and modification system of Escherichia coli K12.</title>
        <authorList>
            <person name="Dryden D.T."/>
            <person name="Cooper L.P."/>
            <person name="Murray N.E."/>
        </authorList>
    </citation>
    <scope>PROTEIN SEQUENCE OF 2-6</scope>
    <scope>FUNCTION</scope>
    <scope>SUBUNIT</scope>
    <source>
        <strain>K12</strain>
    </source>
</reference>
<reference key="6">
    <citation type="journal article" date="1995" name="Nucleic Acids Res.">
        <title>Tyrosine 27 of the specificity polypeptide of EcoKI can be UV crosslinked to a bromodeoxyuridine-substituted DNA target sequence.</title>
        <authorList>
            <person name="Chen A."/>
            <person name="Powell L.M."/>
            <person name="Dryden D.T."/>
            <person name="Murray N.E."/>
            <person name="Brown T."/>
        </authorList>
    </citation>
    <scope>PROTEIN SEQUENCE OF 2-35</scope>
    <scope>DNA-BINDING</scope>
    <source>
        <strain>K12</strain>
    </source>
</reference>
<reference key="7">
    <citation type="journal article" date="1968" name="Nature">
        <title>DNA restriction enzyme from E. coli.</title>
        <authorList>
            <person name="Meselson M."/>
            <person name="Yuan R."/>
        </authorList>
    </citation>
    <scope>FUNCTION</scope>
    <source>
        <strain>K12</strain>
    </source>
</reference>
<reference key="8">
    <citation type="journal article" date="1980" name="Mol. Gen. Genet.">
        <title>The hsd (host specificity) genes of E. coli K 12.</title>
        <authorList>
            <person name="Sain B."/>
            <person name="Murray N.E."/>
        </authorList>
    </citation>
    <scope>FUNCTION</scope>
    <scope>SUBUNIT</scope>
    <scope>OPERON STRUCTURE</scope>
    <source>
        <strain>K12</strain>
    </source>
</reference>
<reference key="9">
    <citation type="journal article" date="1997" name="Biochemistry">
        <title>The in vitro assembly of the EcoKI type I DNA restriction/modification enzyme and its in vivo implications.</title>
        <authorList>
            <person name="Dryden D.T."/>
            <person name="Cooper L.P."/>
            <person name="Thorpe P.H."/>
            <person name="Byron O."/>
        </authorList>
    </citation>
    <scope>FUNCTION</scope>
    <scope>SUBUNIT</scope>
    <source>
        <strain>K12</strain>
    </source>
</reference>
<reference key="10">
    <citation type="journal article" date="2003" name="Nucleic Acids Res.">
        <title>A nomenclature for restriction enzymes, DNA methyltransferases, homing endonucleases and their genes.</title>
        <authorList>
            <person name="Roberts R.J."/>
            <person name="Belfort M."/>
            <person name="Bestor T."/>
            <person name="Bhagwat A.S."/>
            <person name="Bickle T.A."/>
            <person name="Bitinaite J."/>
            <person name="Blumenthal R.M."/>
            <person name="Degtyarev S.K."/>
            <person name="Dryden D.T."/>
            <person name="Dybvig K."/>
            <person name="Firman K."/>
            <person name="Gromova E.S."/>
            <person name="Gumport R.I."/>
            <person name="Halford S.E."/>
            <person name="Hattman S."/>
            <person name="Heitman J."/>
            <person name="Hornby D.P."/>
            <person name="Janulaitis A."/>
            <person name="Jeltsch A."/>
            <person name="Josephsen J."/>
            <person name="Kiss A."/>
            <person name="Klaenhammer T.R."/>
            <person name="Kobayashi I."/>
            <person name="Kong H."/>
            <person name="Krueger D.H."/>
            <person name="Lacks S."/>
            <person name="Marinus M.G."/>
            <person name="Miyahara M."/>
            <person name="Morgan R.D."/>
            <person name="Murray N.E."/>
            <person name="Nagaraja V."/>
            <person name="Piekarowicz A."/>
            <person name="Pingoud A."/>
            <person name="Raleigh E."/>
            <person name="Rao D.N."/>
            <person name="Reich N."/>
            <person name="Repin V.E."/>
            <person name="Selker E.U."/>
            <person name="Shaw P.C."/>
            <person name="Stein D.C."/>
            <person name="Stoddard B.L."/>
            <person name="Szybalski W."/>
            <person name="Trautner T.A."/>
            <person name="Van Etten J.L."/>
            <person name="Vitor J.M."/>
            <person name="Wilson G.G."/>
            <person name="Xu S.Y."/>
        </authorList>
    </citation>
    <scope>NOMENCLATURE</scope>
</reference>
<reference evidence="12 13" key="11">
    <citation type="journal article" date="2009" name="Nucleic Acids Res.">
        <title>The structure of M.EcoKI Type I DNA methyltransferase with a DNA mimic antirestriction protein.</title>
        <authorList>
            <person name="Kennaway C.K."/>
            <person name="Obarska-Kosinska A."/>
            <person name="White J.H."/>
            <person name="Tuszynska I."/>
            <person name="Cooper L.P."/>
            <person name="Bujnicki J.M."/>
            <person name="Trinick J."/>
            <person name="Dryden D.T."/>
        </authorList>
    </citation>
    <scope>STRUCTURE BY ELECTRON MICROSCOPY (18.00 ANGSTROMS) IN COMPLEX WITH METHYLASE SUBUNIT AND ESCHERICHIA PHAGE T7 PROTEIN OCR</scope>
</reference>
<sequence>MSAGKLPEGWVIAPVSTVTTLIRGVTYKKEQAINYLKDDYLPLIRANNIQNGKFDTTDLVFVPKNLVKESQKISPEDIVIAMSSGSKSVVGKSAHQHLPFECSFGAFCGVLRPEKLIFSGFIAHFTKSSLYRNKISSLSAGANINNIKPASFDLINIPIPPLAEQKIIAEKLDTLLAQVDSTKARFEQIPQILKRFRQAVLGGAVNGKLTEKWRNFEPQHSVFKKLNFESILTELRNGLSSKPNESGVGHPILRISSVRAGHVDQNDIRFLECSESELNRHKLQDGDLLFTRYNGSLEFVGVCGLLKKLQHQNLLYPDKLIRARLTKDALPEYIEIFFSSPSARNAMMNCVKTTSGQKGISGKDIKSQVVLLPPVKEQAEIVRRVEQLFAYADTIEKQVNNALARVNNLTQSILAKAFRGELTAQWRAENPDLISGENSAAALLEKIKAERAASGGKKASRKKS</sequence>
<gene>
    <name evidence="8" type="primary">hsdS</name>
    <name type="synonym">hss</name>
    <name type="ordered locus">b4348</name>
    <name type="ordered locus">JW4311</name>
</gene>
<feature type="initiator methionine" description="Removed" evidence="4 5">
    <location>
        <position position="1"/>
    </location>
</feature>
<feature type="chain" id="PRO_0000198035" description="Type I restriction enzyme EcoKI specificity subunit">
    <location>
        <begin position="2"/>
        <end position="464"/>
    </location>
</feature>